<comment type="catalytic activity">
    <reaction evidence="6">
        <text>a very-long-chain acyl-CoA + malonyl-CoA + H(+) = a very-long-chain 3-oxoacyl-CoA + CO2 + CoA</text>
        <dbReference type="Rhea" id="RHEA:32727"/>
        <dbReference type="ChEBI" id="CHEBI:15378"/>
        <dbReference type="ChEBI" id="CHEBI:16526"/>
        <dbReference type="ChEBI" id="CHEBI:57287"/>
        <dbReference type="ChEBI" id="CHEBI:57384"/>
        <dbReference type="ChEBI" id="CHEBI:90725"/>
        <dbReference type="ChEBI" id="CHEBI:90736"/>
        <dbReference type="EC" id="2.3.1.199"/>
    </reaction>
</comment>
<comment type="pathway">
    <text>Lipid metabolism; fatty acid biosynthesis.</text>
</comment>
<comment type="subcellular location">
    <subcellularLocation>
        <location evidence="2">Membrane</location>
        <topology evidence="2">Single-pass membrane protein</topology>
    </subcellularLocation>
</comment>
<comment type="alternative products">
    <event type="alternative splicing"/>
    <isoform>
        <id>Q9FH27-1</id>
        <name>1</name>
        <sequence type="displayed"/>
    </isoform>
    <text>A number of isoforms are produced. According to EST sequences.</text>
</comment>
<comment type="tissue specificity">
    <text evidence="4">Expressed in flowers.</text>
</comment>
<comment type="induction">
    <text evidence="3">Repressed by herbicides such as flufenacet and benfuresate.</text>
</comment>
<comment type="similarity">
    <text evidence="6">Belongs to the thiolase-like superfamily. Chalcone/stilbene synthases family.</text>
</comment>
<accession>Q9FH27</accession>
<protein>
    <recommendedName>
        <fullName evidence="5">Probable 3-ketoacyl-CoA synthase 21</fullName>
        <shortName evidence="5">KCS-21</shortName>
        <ecNumber evidence="6">2.3.1.199</ecNumber>
    </recommendedName>
    <alternativeName>
        <fullName evidence="5">Very long-chain fatty acid condensing enzyme 21</fullName>
        <shortName evidence="5">VLCFA condensing enzyme 21</shortName>
    </alternativeName>
</protein>
<evidence type="ECO:0000250" key="1">
    <source>
        <dbReference type="UniProtKB" id="Q38860"/>
    </source>
</evidence>
<evidence type="ECO:0000255" key="2"/>
<evidence type="ECO:0000269" key="3">
    <source>
    </source>
</evidence>
<evidence type="ECO:0000269" key="4">
    <source>
    </source>
</evidence>
<evidence type="ECO:0000303" key="5">
    <source>
    </source>
</evidence>
<evidence type="ECO:0000305" key="6"/>
<evidence type="ECO:0000305" key="7">
    <source>
    </source>
</evidence>
<evidence type="ECO:0000312" key="8">
    <source>
        <dbReference type="Araport" id="AT5G49070"/>
    </source>
</evidence>
<evidence type="ECO:0000312" key="9">
    <source>
        <dbReference type="EMBL" id="BAB10089.1"/>
    </source>
</evidence>
<feature type="chain" id="PRO_0000249112" description="Probable 3-ketoacyl-CoA synthase 21">
    <location>
        <begin position="1"/>
        <end position="464"/>
    </location>
</feature>
<feature type="transmembrane region" description="Helical" evidence="2">
    <location>
        <begin position="21"/>
        <end position="41"/>
    </location>
</feature>
<feature type="domain" description="FAE" evidence="2">
    <location>
        <begin position="42"/>
        <end position="333"/>
    </location>
</feature>
<feature type="active site" evidence="1">
    <location>
        <position position="187"/>
    </location>
</feature>
<feature type="active site" evidence="1">
    <location>
        <position position="352"/>
    </location>
</feature>
<feature type="active site" evidence="1">
    <location>
        <position position="356"/>
    </location>
</feature>
<feature type="active site" evidence="1">
    <location>
        <position position="385"/>
    </location>
</feature>
<feature type="active site" evidence="1">
    <location>
        <position position="389"/>
    </location>
</feature>
<reference key="1">
    <citation type="journal article" date="2000" name="DNA Res.">
        <title>Structural analysis of Arabidopsis thaliana chromosome 5. X. Sequence features of the regions of 3,076,755 bp covered by sixty P1 and TAC clones.</title>
        <authorList>
            <person name="Sato S."/>
            <person name="Nakamura Y."/>
            <person name="Kaneko T."/>
            <person name="Katoh T."/>
            <person name="Asamizu E."/>
            <person name="Kotani H."/>
            <person name="Tabata S."/>
        </authorList>
    </citation>
    <scope>NUCLEOTIDE SEQUENCE [LARGE SCALE GENOMIC DNA]</scope>
    <source>
        <strain>cv. Columbia</strain>
    </source>
</reference>
<reference key="2">
    <citation type="journal article" date="2017" name="Plant J.">
        <title>Araport11: a complete reannotation of the Arabidopsis thaliana reference genome.</title>
        <authorList>
            <person name="Cheng C.Y."/>
            <person name="Krishnakumar V."/>
            <person name="Chan A.P."/>
            <person name="Thibaud-Nissen F."/>
            <person name="Schobel S."/>
            <person name="Town C.D."/>
        </authorList>
    </citation>
    <scope>GENOME REANNOTATION</scope>
    <source>
        <strain>cv. Columbia</strain>
    </source>
</reference>
<reference key="3">
    <citation type="journal article" date="2003" name="Pest Manag. Sci.">
        <title>Flufenacet herbicide treatment phenocopies the fiddlehead mutant in Arabidopsis thaliana.</title>
        <authorList>
            <person name="Lechelt-Kunze C."/>
            <person name="Meissner R.C."/>
            <person name="Drewes M."/>
            <person name="Tietjen K."/>
        </authorList>
    </citation>
    <scope>INDUCTION</scope>
    <scope>GENE FAMILY</scope>
</reference>
<reference key="4">
    <citation type="journal article" date="2008" name="Plant Mol. Biol.">
        <title>The VLCFA elongase gene family in Arabidopsis thaliana: phylogenetic analysis, 3D modelling and expression profiling.</title>
        <authorList>
            <person name="Joubes J."/>
            <person name="Raffaele S."/>
            <person name="Bourdenx B."/>
            <person name="Garcia C."/>
            <person name="Laroche-Traineau J."/>
            <person name="Moreau P."/>
            <person name="Domergue F."/>
            <person name="Lessire R."/>
        </authorList>
    </citation>
    <scope>GENE FAMILY</scope>
    <scope>NOMENCLATURE</scope>
    <scope>3D-STRUCTURE MODELING</scope>
    <scope>TISSUE SPECIFICITY</scope>
</reference>
<dbReference type="EC" id="2.3.1.199" evidence="6"/>
<dbReference type="EMBL" id="AB023028">
    <property type="protein sequence ID" value="BAB10089.1"/>
    <property type="molecule type" value="Genomic_DNA"/>
</dbReference>
<dbReference type="EMBL" id="CP002688">
    <property type="protein sequence ID" value="AED95768.1"/>
    <property type="molecule type" value="Genomic_DNA"/>
</dbReference>
<dbReference type="RefSeq" id="NP_199718.1">
    <molecule id="Q9FH27-1"/>
    <property type="nucleotide sequence ID" value="NM_124284.1"/>
</dbReference>
<dbReference type="SMR" id="Q9FH27"/>
<dbReference type="FunCoup" id="Q9FH27">
    <property type="interactions" value="202"/>
</dbReference>
<dbReference type="STRING" id="3702.Q9FH27"/>
<dbReference type="iPTMnet" id="Q9FH27"/>
<dbReference type="PaxDb" id="3702-AT5G49070.1"/>
<dbReference type="EnsemblPlants" id="AT5G49070.1">
    <molecule id="Q9FH27-1"/>
    <property type="protein sequence ID" value="AT5G49070.1"/>
    <property type="gene ID" value="AT5G49070"/>
</dbReference>
<dbReference type="GeneID" id="834966"/>
<dbReference type="Gramene" id="AT5G49070.1">
    <molecule id="Q9FH27-1"/>
    <property type="protein sequence ID" value="AT5G49070.1"/>
    <property type="gene ID" value="AT5G49070"/>
</dbReference>
<dbReference type="KEGG" id="ath:AT5G49070"/>
<dbReference type="Araport" id="AT5G49070"/>
<dbReference type="TAIR" id="AT5G49070">
    <property type="gene designation" value="KCS21"/>
</dbReference>
<dbReference type="eggNOG" id="ENOG502RGTN">
    <property type="taxonomic scope" value="Eukaryota"/>
</dbReference>
<dbReference type="HOGENOM" id="CLU_013238_2_1_1"/>
<dbReference type="InParanoid" id="Q9FH27"/>
<dbReference type="OMA" id="PNTENKW"/>
<dbReference type="PhylomeDB" id="Q9FH27"/>
<dbReference type="BioCyc" id="ARA:AT5G49070-MONOMER"/>
<dbReference type="UniPathway" id="UPA00094"/>
<dbReference type="PRO" id="PR:Q9FH27"/>
<dbReference type="Proteomes" id="UP000006548">
    <property type="component" value="Chromosome 5"/>
</dbReference>
<dbReference type="ExpressionAtlas" id="Q9FH27">
    <property type="expression patterns" value="baseline and differential"/>
</dbReference>
<dbReference type="GO" id="GO:0016020">
    <property type="term" value="C:membrane"/>
    <property type="evidence" value="ECO:0007669"/>
    <property type="project" value="UniProtKB-SubCell"/>
</dbReference>
<dbReference type="GO" id="GO:0009922">
    <property type="term" value="F:fatty acid elongase activity"/>
    <property type="evidence" value="ECO:0007669"/>
    <property type="project" value="UniProtKB-EC"/>
</dbReference>
<dbReference type="GO" id="GO:0006633">
    <property type="term" value="P:fatty acid biosynthetic process"/>
    <property type="evidence" value="ECO:0007669"/>
    <property type="project" value="UniProtKB-UniPathway"/>
</dbReference>
<dbReference type="CDD" id="cd00831">
    <property type="entry name" value="CHS_like"/>
    <property type="match status" value="1"/>
</dbReference>
<dbReference type="Gene3D" id="3.40.47.10">
    <property type="match status" value="1"/>
</dbReference>
<dbReference type="InterPro" id="IPR012392">
    <property type="entry name" value="3-ktacl-CoA_syn"/>
</dbReference>
<dbReference type="InterPro" id="IPR013747">
    <property type="entry name" value="ACP_syn_III_C"/>
</dbReference>
<dbReference type="InterPro" id="IPR013601">
    <property type="entry name" value="FAE1_typ3_polyketide_synth"/>
</dbReference>
<dbReference type="InterPro" id="IPR016039">
    <property type="entry name" value="Thiolase-like"/>
</dbReference>
<dbReference type="PANTHER" id="PTHR31561">
    <property type="entry name" value="3-KETOACYL-COA SYNTHASE"/>
    <property type="match status" value="1"/>
</dbReference>
<dbReference type="Pfam" id="PF08541">
    <property type="entry name" value="ACP_syn_III_C"/>
    <property type="match status" value="1"/>
</dbReference>
<dbReference type="Pfam" id="PF08392">
    <property type="entry name" value="FAE1_CUT1_RppA"/>
    <property type="match status" value="1"/>
</dbReference>
<dbReference type="PIRSF" id="PIRSF036417">
    <property type="entry name" value="3-ktacl-CoA_syn"/>
    <property type="match status" value="1"/>
</dbReference>
<dbReference type="SUPFAM" id="SSF53901">
    <property type="entry name" value="Thiolase-like"/>
    <property type="match status" value="2"/>
</dbReference>
<organism>
    <name type="scientific">Arabidopsis thaliana</name>
    <name type="common">Mouse-ear cress</name>
    <dbReference type="NCBI Taxonomy" id="3702"/>
    <lineage>
        <taxon>Eukaryota</taxon>
        <taxon>Viridiplantae</taxon>
        <taxon>Streptophyta</taxon>
        <taxon>Embryophyta</taxon>
        <taxon>Tracheophyta</taxon>
        <taxon>Spermatophyta</taxon>
        <taxon>Magnoliopsida</taxon>
        <taxon>eudicotyledons</taxon>
        <taxon>Gunneridae</taxon>
        <taxon>Pentapetalae</taxon>
        <taxon>rosids</taxon>
        <taxon>malvids</taxon>
        <taxon>Brassicales</taxon>
        <taxon>Brassicaceae</taxon>
        <taxon>Camelineae</taxon>
        <taxon>Arabidopsis</taxon>
    </lineage>
</organism>
<proteinExistence type="evidence at transcript level"/>
<keyword id="KW-0012">Acyltransferase</keyword>
<keyword id="KW-0025">Alternative splicing</keyword>
<keyword id="KW-0472">Membrane</keyword>
<keyword id="KW-1185">Reference proteome</keyword>
<keyword id="KW-0808">Transferase</keyword>
<keyword id="KW-0812">Transmembrane</keyword>
<keyword id="KW-1133">Transmembrane helix</keyword>
<gene>
    <name evidence="5" type="primary">KCS21</name>
    <name evidence="7" type="synonym">KCS20</name>
    <name evidence="8" type="ordered locus">At5g49070</name>
    <name evidence="9" type="ORF">K20J1.4</name>
</gene>
<name>KCS21_ARATH</name>
<sequence length="464" mass="52558">MNQTIHRVSPISMSISELTTLLSSGVSVFEIFAGLLVVHLIYQRIRTRVKVYLLDFTCYRAPDSNRVPMSTLIETIYLDDKLDQESIDFQARILERSWLSNQTSIPRSLMEIPLKKSLSSVKIETMTTIFTSVEDLLRKNKLSPRSIDILITNCSLHSPSPSLSAMVINKFHMRSNIKSFNLSGMGCAAGILSVNLANDLLQAHRGSLALIVSTEALNTHWYIGKDRSMLLTNCLFRMGAAAVLMSSNDHDRDNAKYELLHVVRKNKAKDDRAYRCIYQDIDSDEKQGVSITKDVISVAGDMLKMNLTSLGPLVLPYLEQFQYVIQHILCKKLKIYESNSSYTPNFKTAFEHFCIHTGGRAVIQAMEMNLKLTKVDIEPSKMTLHRFGNTSSSSIWYALSYLEAKRRMKKGDRVLQIAFGSGFKCNSAVWRCIRKVEPNTENKWLDFIDSYPVDVPDSTNIRPG</sequence>